<comment type="function">
    <text evidence="1">Forms part of the ribosomal stalk which helps the ribosome interact with GTP-bound translation factors.</text>
</comment>
<comment type="subunit">
    <text evidence="1">Part of the ribosomal stalk of the 50S ribosomal subunit. Interacts with L10 and the large rRNA to form the base of the stalk. L10 forms an elongated spine to which L12 dimers bind in a sequential fashion forming a multimeric L10(L12)X complex.</text>
</comment>
<comment type="PTM">
    <text evidence="1">One or more lysine residues are methylated.</text>
</comment>
<comment type="similarity">
    <text evidence="1">Belongs to the universal ribosomal protein uL11 family.</text>
</comment>
<evidence type="ECO:0000255" key="1">
    <source>
        <dbReference type="HAMAP-Rule" id="MF_00736"/>
    </source>
</evidence>
<evidence type="ECO:0000305" key="2"/>
<keyword id="KW-0488">Methylation</keyword>
<keyword id="KW-0687">Ribonucleoprotein</keyword>
<keyword id="KW-0689">Ribosomal protein</keyword>
<keyword id="KW-0694">RNA-binding</keyword>
<keyword id="KW-0699">rRNA-binding</keyword>
<dbReference type="EMBL" id="CP000702">
    <property type="protein sequence ID" value="ABQ46490.1"/>
    <property type="molecule type" value="Genomic_DNA"/>
</dbReference>
<dbReference type="RefSeq" id="WP_011943108.1">
    <property type="nucleotide sequence ID" value="NC_009486.1"/>
</dbReference>
<dbReference type="BMRB" id="A5IJW7"/>
<dbReference type="SMR" id="A5IJW7"/>
<dbReference type="STRING" id="390874.Tpet_0466"/>
<dbReference type="KEGG" id="tpt:Tpet_0466"/>
<dbReference type="eggNOG" id="COG0080">
    <property type="taxonomic scope" value="Bacteria"/>
</dbReference>
<dbReference type="HOGENOM" id="CLU_074237_2_0_0"/>
<dbReference type="Proteomes" id="UP000006558">
    <property type="component" value="Chromosome"/>
</dbReference>
<dbReference type="GO" id="GO:0022625">
    <property type="term" value="C:cytosolic large ribosomal subunit"/>
    <property type="evidence" value="ECO:0007669"/>
    <property type="project" value="TreeGrafter"/>
</dbReference>
<dbReference type="GO" id="GO:0070180">
    <property type="term" value="F:large ribosomal subunit rRNA binding"/>
    <property type="evidence" value="ECO:0007669"/>
    <property type="project" value="UniProtKB-UniRule"/>
</dbReference>
<dbReference type="GO" id="GO:0003735">
    <property type="term" value="F:structural constituent of ribosome"/>
    <property type="evidence" value="ECO:0007669"/>
    <property type="project" value="InterPro"/>
</dbReference>
<dbReference type="GO" id="GO:0006412">
    <property type="term" value="P:translation"/>
    <property type="evidence" value="ECO:0007669"/>
    <property type="project" value="UniProtKB-UniRule"/>
</dbReference>
<dbReference type="CDD" id="cd00349">
    <property type="entry name" value="Ribosomal_L11"/>
    <property type="match status" value="1"/>
</dbReference>
<dbReference type="FunFam" id="1.10.10.250:FF:000001">
    <property type="entry name" value="50S ribosomal protein L11"/>
    <property type="match status" value="1"/>
</dbReference>
<dbReference type="FunFam" id="3.30.1550.10:FF:000001">
    <property type="entry name" value="50S ribosomal protein L11"/>
    <property type="match status" value="1"/>
</dbReference>
<dbReference type="Gene3D" id="1.10.10.250">
    <property type="entry name" value="Ribosomal protein L11, C-terminal domain"/>
    <property type="match status" value="1"/>
</dbReference>
<dbReference type="Gene3D" id="3.30.1550.10">
    <property type="entry name" value="Ribosomal protein L11/L12, N-terminal domain"/>
    <property type="match status" value="1"/>
</dbReference>
<dbReference type="HAMAP" id="MF_00736">
    <property type="entry name" value="Ribosomal_uL11"/>
    <property type="match status" value="1"/>
</dbReference>
<dbReference type="InterPro" id="IPR000911">
    <property type="entry name" value="Ribosomal_uL11"/>
</dbReference>
<dbReference type="InterPro" id="IPR006519">
    <property type="entry name" value="Ribosomal_uL11_bac-typ"/>
</dbReference>
<dbReference type="InterPro" id="IPR020783">
    <property type="entry name" value="Ribosomal_uL11_C"/>
</dbReference>
<dbReference type="InterPro" id="IPR036769">
    <property type="entry name" value="Ribosomal_uL11_C_sf"/>
</dbReference>
<dbReference type="InterPro" id="IPR020785">
    <property type="entry name" value="Ribosomal_uL11_CS"/>
</dbReference>
<dbReference type="InterPro" id="IPR020784">
    <property type="entry name" value="Ribosomal_uL11_N"/>
</dbReference>
<dbReference type="InterPro" id="IPR036796">
    <property type="entry name" value="Ribosomal_uL11_N_sf"/>
</dbReference>
<dbReference type="NCBIfam" id="TIGR01632">
    <property type="entry name" value="L11_bact"/>
    <property type="match status" value="1"/>
</dbReference>
<dbReference type="PANTHER" id="PTHR11661">
    <property type="entry name" value="60S RIBOSOMAL PROTEIN L12"/>
    <property type="match status" value="1"/>
</dbReference>
<dbReference type="PANTHER" id="PTHR11661:SF1">
    <property type="entry name" value="LARGE RIBOSOMAL SUBUNIT PROTEIN UL11M"/>
    <property type="match status" value="1"/>
</dbReference>
<dbReference type="Pfam" id="PF00298">
    <property type="entry name" value="Ribosomal_L11"/>
    <property type="match status" value="1"/>
</dbReference>
<dbReference type="Pfam" id="PF03946">
    <property type="entry name" value="Ribosomal_L11_N"/>
    <property type="match status" value="1"/>
</dbReference>
<dbReference type="SMART" id="SM00649">
    <property type="entry name" value="RL11"/>
    <property type="match status" value="1"/>
</dbReference>
<dbReference type="SUPFAM" id="SSF54747">
    <property type="entry name" value="Ribosomal L11/L12e N-terminal domain"/>
    <property type="match status" value="1"/>
</dbReference>
<dbReference type="SUPFAM" id="SSF46906">
    <property type="entry name" value="Ribosomal protein L11, C-terminal domain"/>
    <property type="match status" value="1"/>
</dbReference>
<dbReference type="PROSITE" id="PS00359">
    <property type="entry name" value="RIBOSOMAL_L11"/>
    <property type="match status" value="1"/>
</dbReference>
<protein>
    <recommendedName>
        <fullName evidence="1">Large ribosomal subunit protein uL11</fullName>
    </recommendedName>
    <alternativeName>
        <fullName evidence="2">50S ribosomal protein L11</fullName>
    </alternativeName>
</protein>
<reference key="1">
    <citation type="submission" date="2007-05" db="EMBL/GenBank/DDBJ databases">
        <title>Complete sequence of Thermotoga petrophila RKU-1.</title>
        <authorList>
            <consortium name="US DOE Joint Genome Institute"/>
            <person name="Copeland A."/>
            <person name="Lucas S."/>
            <person name="Lapidus A."/>
            <person name="Barry K."/>
            <person name="Glavina del Rio T."/>
            <person name="Dalin E."/>
            <person name="Tice H."/>
            <person name="Pitluck S."/>
            <person name="Sims D."/>
            <person name="Brettin T."/>
            <person name="Bruce D."/>
            <person name="Detter J.C."/>
            <person name="Han C."/>
            <person name="Tapia R."/>
            <person name="Schmutz J."/>
            <person name="Larimer F."/>
            <person name="Land M."/>
            <person name="Hauser L."/>
            <person name="Kyrpides N."/>
            <person name="Mikhailova N."/>
            <person name="Nelson K."/>
            <person name="Gogarten J.P."/>
            <person name="Noll K."/>
            <person name="Richardson P."/>
        </authorList>
    </citation>
    <scope>NUCLEOTIDE SEQUENCE [LARGE SCALE GENOMIC DNA]</scope>
    <source>
        <strain>ATCC BAA-488 / DSM 13995 / JCM 10881 / RKU-1</strain>
    </source>
</reference>
<organism>
    <name type="scientific">Thermotoga petrophila (strain ATCC BAA-488 / DSM 13995 / JCM 10881 / RKU-1)</name>
    <dbReference type="NCBI Taxonomy" id="390874"/>
    <lineage>
        <taxon>Bacteria</taxon>
        <taxon>Thermotogati</taxon>
        <taxon>Thermotogota</taxon>
        <taxon>Thermotogae</taxon>
        <taxon>Thermotogales</taxon>
        <taxon>Thermotogaceae</taxon>
        <taxon>Thermotoga</taxon>
    </lineage>
</organism>
<name>RL11_THEP1</name>
<sequence>MAKKVTAQIKLQLPAGKATPAPPVGPALGQHGVNIMEFCKRFNAETADKAGMILPVVITVYEDKSFTFIIKTPPASFLLMKAAGLEKGSSEPKRKIVGKVTRKQIEEIARTKMPDLNANSLEAAMKIIEGTAKSMGIEVVD</sequence>
<accession>A5IJW7</accession>
<feature type="chain" id="PRO_1000046287" description="Large ribosomal subunit protein uL11">
    <location>
        <begin position="1"/>
        <end position="141"/>
    </location>
</feature>
<proteinExistence type="inferred from homology"/>
<gene>
    <name evidence="1" type="primary">rplK</name>
    <name type="ordered locus">Tpet_0466</name>
</gene>